<evidence type="ECO:0000255" key="1">
    <source>
        <dbReference type="HAMAP-Rule" id="MF_01331"/>
    </source>
</evidence>
<evidence type="ECO:0000305" key="2"/>
<sequence length="124" mass="14097">MTERVTYRAKTKFLVASPTKVRPVANVVKCKPYVRAMALLGHLPHKGARLISKVMKSAASNAIDRDKRLDEERLFVRDIQIDEGPRLKRLWCRGRGRGDVQLKRMCHITVVVEESVRTKDGSKG</sequence>
<name>RL22_TREPA</name>
<reference key="1">
    <citation type="journal article" date="1998" name="Science">
        <title>Complete genome sequence of Treponema pallidum, the syphilis spirochete.</title>
        <authorList>
            <person name="Fraser C.M."/>
            <person name="Norris S.J."/>
            <person name="Weinstock G.M."/>
            <person name="White O."/>
            <person name="Sutton G.G."/>
            <person name="Dodson R.J."/>
            <person name="Gwinn M.L."/>
            <person name="Hickey E.K."/>
            <person name="Clayton R.A."/>
            <person name="Ketchum K.A."/>
            <person name="Sodergren E."/>
            <person name="Hardham J.M."/>
            <person name="McLeod M.P."/>
            <person name="Salzberg S.L."/>
            <person name="Peterson J.D."/>
            <person name="Khalak H.G."/>
            <person name="Richardson D.L."/>
            <person name="Howell J.K."/>
            <person name="Chidambaram M."/>
            <person name="Utterback T.R."/>
            <person name="McDonald L.A."/>
            <person name="Artiach P."/>
            <person name="Bowman C."/>
            <person name="Cotton M.D."/>
            <person name="Fujii C."/>
            <person name="Garland S.A."/>
            <person name="Hatch B."/>
            <person name="Horst K."/>
            <person name="Roberts K.M."/>
            <person name="Sandusky M."/>
            <person name="Weidman J.F."/>
            <person name="Smith H.O."/>
            <person name="Venter J.C."/>
        </authorList>
    </citation>
    <scope>NUCLEOTIDE SEQUENCE [LARGE SCALE GENOMIC DNA]</scope>
    <source>
        <strain>Nichols</strain>
    </source>
</reference>
<organism>
    <name type="scientific">Treponema pallidum (strain Nichols)</name>
    <dbReference type="NCBI Taxonomy" id="243276"/>
    <lineage>
        <taxon>Bacteria</taxon>
        <taxon>Pseudomonadati</taxon>
        <taxon>Spirochaetota</taxon>
        <taxon>Spirochaetia</taxon>
        <taxon>Spirochaetales</taxon>
        <taxon>Treponemataceae</taxon>
        <taxon>Treponema</taxon>
    </lineage>
</organism>
<feature type="chain" id="PRO_0000125254" description="Large ribosomal subunit protein uL22">
    <location>
        <begin position="1"/>
        <end position="124"/>
    </location>
</feature>
<keyword id="KW-1185">Reference proteome</keyword>
<keyword id="KW-0687">Ribonucleoprotein</keyword>
<keyword id="KW-0689">Ribosomal protein</keyword>
<keyword id="KW-0694">RNA-binding</keyword>
<keyword id="KW-0699">rRNA-binding</keyword>
<dbReference type="EMBL" id="AE000520">
    <property type="protein sequence ID" value="AAC65179.1"/>
    <property type="molecule type" value="Genomic_DNA"/>
</dbReference>
<dbReference type="PIR" id="D71355">
    <property type="entry name" value="D71355"/>
</dbReference>
<dbReference type="RefSeq" id="WP_010881641.1">
    <property type="nucleotide sequence ID" value="NC_021490.2"/>
</dbReference>
<dbReference type="SMR" id="O83224"/>
<dbReference type="IntAct" id="O83224">
    <property type="interactions" value="5"/>
</dbReference>
<dbReference type="STRING" id="243276.TP_0194"/>
<dbReference type="EnsemblBacteria" id="AAC65179">
    <property type="protein sequence ID" value="AAC65179"/>
    <property type="gene ID" value="TP_0194"/>
</dbReference>
<dbReference type="GeneID" id="93875982"/>
<dbReference type="KEGG" id="tpa:TP_0194"/>
<dbReference type="KEGG" id="tpw:TPANIC_0194"/>
<dbReference type="eggNOG" id="COG0091">
    <property type="taxonomic scope" value="Bacteria"/>
</dbReference>
<dbReference type="HOGENOM" id="CLU_083987_3_1_12"/>
<dbReference type="OrthoDB" id="9805969at2"/>
<dbReference type="Proteomes" id="UP000000811">
    <property type="component" value="Chromosome"/>
</dbReference>
<dbReference type="GO" id="GO:0022625">
    <property type="term" value="C:cytosolic large ribosomal subunit"/>
    <property type="evidence" value="ECO:0007669"/>
    <property type="project" value="TreeGrafter"/>
</dbReference>
<dbReference type="GO" id="GO:0019843">
    <property type="term" value="F:rRNA binding"/>
    <property type="evidence" value="ECO:0007669"/>
    <property type="project" value="UniProtKB-UniRule"/>
</dbReference>
<dbReference type="GO" id="GO:0003735">
    <property type="term" value="F:structural constituent of ribosome"/>
    <property type="evidence" value="ECO:0007669"/>
    <property type="project" value="InterPro"/>
</dbReference>
<dbReference type="GO" id="GO:0006412">
    <property type="term" value="P:translation"/>
    <property type="evidence" value="ECO:0007669"/>
    <property type="project" value="UniProtKB-UniRule"/>
</dbReference>
<dbReference type="CDD" id="cd00336">
    <property type="entry name" value="Ribosomal_L22"/>
    <property type="match status" value="1"/>
</dbReference>
<dbReference type="Gene3D" id="3.90.470.10">
    <property type="entry name" value="Ribosomal protein L22/L17"/>
    <property type="match status" value="1"/>
</dbReference>
<dbReference type="HAMAP" id="MF_01331_B">
    <property type="entry name" value="Ribosomal_uL22_B"/>
    <property type="match status" value="1"/>
</dbReference>
<dbReference type="InterPro" id="IPR001063">
    <property type="entry name" value="Ribosomal_uL22"/>
</dbReference>
<dbReference type="InterPro" id="IPR005727">
    <property type="entry name" value="Ribosomal_uL22_bac/chlpt-type"/>
</dbReference>
<dbReference type="InterPro" id="IPR047867">
    <property type="entry name" value="Ribosomal_uL22_bac/org-type"/>
</dbReference>
<dbReference type="InterPro" id="IPR018260">
    <property type="entry name" value="Ribosomal_uL22_CS"/>
</dbReference>
<dbReference type="InterPro" id="IPR036394">
    <property type="entry name" value="Ribosomal_uL22_sf"/>
</dbReference>
<dbReference type="NCBIfam" id="TIGR01044">
    <property type="entry name" value="rplV_bact"/>
    <property type="match status" value="1"/>
</dbReference>
<dbReference type="PANTHER" id="PTHR13501">
    <property type="entry name" value="CHLOROPLAST 50S RIBOSOMAL PROTEIN L22-RELATED"/>
    <property type="match status" value="1"/>
</dbReference>
<dbReference type="PANTHER" id="PTHR13501:SF8">
    <property type="entry name" value="LARGE RIBOSOMAL SUBUNIT PROTEIN UL22M"/>
    <property type="match status" value="1"/>
</dbReference>
<dbReference type="Pfam" id="PF00237">
    <property type="entry name" value="Ribosomal_L22"/>
    <property type="match status" value="1"/>
</dbReference>
<dbReference type="SUPFAM" id="SSF54843">
    <property type="entry name" value="Ribosomal protein L22"/>
    <property type="match status" value="1"/>
</dbReference>
<dbReference type="PROSITE" id="PS00464">
    <property type="entry name" value="RIBOSOMAL_L22"/>
    <property type="match status" value="1"/>
</dbReference>
<gene>
    <name evidence="1" type="primary">rplV</name>
    <name type="ordered locus">TP_0194</name>
</gene>
<accession>O83224</accession>
<proteinExistence type="inferred from homology"/>
<protein>
    <recommendedName>
        <fullName evidence="1">Large ribosomal subunit protein uL22</fullName>
    </recommendedName>
    <alternativeName>
        <fullName evidence="2">50S ribosomal protein L22</fullName>
    </alternativeName>
</protein>
<comment type="function">
    <text evidence="1">This protein binds specifically to 23S rRNA; its binding is stimulated by other ribosomal proteins, e.g. L4, L17, and L20. It is important during the early stages of 50S assembly. It makes multiple contacts with different domains of the 23S rRNA in the assembled 50S subunit and ribosome (By similarity).</text>
</comment>
<comment type="function">
    <text evidence="1">The globular domain of the protein is located near the polypeptide exit tunnel on the outside of the subunit, while an extended beta-hairpin is found that lines the wall of the exit tunnel in the center of the 70S ribosome.</text>
</comment>
<comment type="subunit">
    <text evidence="1">Part of the 50S ribosomal subunit.</text>
</comment>
<comment type="similarity">
    <text evidence="1">Belongs to the universal ribosomal protein uL22 family.</text>
</comment>